<gene>
    <name evidence="6" type="primary">Thap4</name>
</gene>
<sequence>MVICCAAVNCSNRQGKGEKRAVSFHRFPLKDSKRLIQWLKAVQRDNWTPTKYSFLCSEHFTKDSFSKRLEDQHRLLKPTAVPSIFHLSEKKRGAGGHGPARRKTTGAMRGHTSAATGKGTIGSSLSSSDNLMAKPESRKLKRASPQDDTAPKATPGAVSQEPGQSLERTPGDQAAPLARGQEEAQVSATEADHQKASSSAADAGGADKSGISMDDFTPPGSGACKFIGSLHSYSFSSKHTRERPSVPREPMDRKRLKRDIEPRCSGNSVAQSPPSSSLTATPQKASQSPSAPPTDVTPKPAAEAVQSEHSDANPMSINEVILSASGACKLIDSLHSYCFSARQNKSQVCCLREQVEKKNGELKSLRQRVSRSDSQVRKLREKLDELRRASLPYLPYLSGLLPPSHEPPKLNPVVEPLSWMLGTWLSEPPGVGTFPTLQPFQYLEEVHISHVGQPMLNFSFNSFHPETHKPMHRECGFIRLKPDTNKVAFVSAQNTGVVEVEEGEVNGQELCVSSHSISRISFAKEPHVQQITRKFRLNSEGKLEQTVSMATTTQPMTQHLHITYKKVTP</sequence>
<name>THAP4_RAT</name>
<proteinExistence type="evidence at transcript level"/>
<feature type="chain" id="PRO_0000247859" description="Peroxynitrite isomerase THAP4">
    <location>
        <begin position="1"/>
        <end position="569"/>
    </location>
</feature>
<feature type="zinc finger region" description="THAP-type" evidence="3">
    <location>
        <begin position="1"/>
        <end position="85"/>
    </location>
</feature>
<feature type="region of interest" description="Disordered" evidence="4">
    <location>
        <begin position="83"/>
        <end position="219"/>
    </location>
</feature>
<feature type="region of interest" description="Disordered" evidence="4">
    <location>
        <begin position="235"/>
        <end position="312"/>
    </location>
</feature>
<feature type="region of interest" description="Nitrobindin" evidence="2">
    <location>
        <begin position="407"/>
        <end position="569"/>
    </location>
</feature>
<feature type="short sequence motif" description="HCFC1-binding motif (HBM)" evidence="1">
    <location>
        <begin position="230"/>
        <end position="233"/>
    </location>
</feature>
<feature type="compositionally biased region" description="Polar residues" evidence="4">
    <location>
        <begin position="121"/>
        <end position="130"/>
    </location>
</feature>
<feature type="compositionally biased region" description="Low complexity" evidence="4">
    <location>
        <begin position="196"/>
        <end position="210"/>
    </location>
</feature>
<feature type="compositionally biased region" description="Basic and acidic residues" evidence="4">
    <location>
        <begin position="242"/>
        <end position="262"/>
    </location>
</feature>
<feature type="compositionally biased region" description="Polar residues" evidence="4">
    <location>
        <begin position="265"/>
        <end position="279"/>
    </location>
</feature>
<feature type="compositionally biased region" description="Low complexity" evidence="4">
    <location>
        <begin position="280"/>
        <end position="289"/>
    </location>
</feature>
<feature type="binding site" evidence="2">
    <location>
        <position position="436"/>
    </location>
    <ligand>
        <name>heme b</name>
        <dbReference type="ChEBI" id="CHEBI:60344"/>
    </ligand>
</feature>
<feature type="binding site" description="axial binding residue" evidence="2">
    <location>
        <position position="559"/>
    </location>
    <ligand>
        <name>heme b</name>
        <dbReference type="ChEBI" id="CHEBI:60344"/>
    </ligand>
    <ligandPart>
        <name>Fe</name>
        <dbReference type="ChEBI" id="CHEBI:18248"/>
    </ligandPart>
</feature>
<feature type="modified residue" description="Phosphoserine" evidence="2">
    <location>
        <position position="159"/>
    </location>
</feature>
<feature type="modified residue" description="Phosphoserine" evidence="2">
    <location>
        <position position="234"/>
    </location>
</feature>
<reference key="1">
    <citation type="journal article" date="2004" name="Genome Res.">
        <title>The status, quality, and expansion of the NIH full-length cDNA project: the Mammalian Gene Collection (MGC).</title>
        <authorList>
            <consortium name="The MGC Project Team"/>
        </authorList>
    </citation>
    <scope>NUCLEOTIDE SEQUENCE [LARGE SCALE MRNA]</scope>
    <source>
        <tissue>Kidney</tissue>
    </source>
</reference>
<protein>
    <recommendedName>
        <fullName evidence="5">Peroxynitrite isomerase THAP4</fullName>
        <ecNumber evidence="2">5.99.-.-</ecNumber>
    </recommendedName>
    <alternativeName>
        <fullName evidence="5">Ferric nitrobindin</fullName>
        <shortName evidence="5">Nb(III)</shortName>
    </alternativeName>
    <alternativeName>
        <fullName evidence="6">THAP domain-containing protein 4</fullName>
    </alternativeName>
</protein>
<accession>Q642B6</accession>
<dbReference type="EC" id="5.99.-.-" evidence="2"/>
<dbReference type="EMBL" id="BC081882">
    <property type="protein sequence ID" value="AAH81882.1"/>
    <property type="molecule type" value="mRNA"/>
</dbReference>
<dbReference type="RefSeq" id="NP_001005564.1">
    <property type="nucleotide sequence ID" value="NM_001005564.1"/>
</dbReference>
<dbReference type="SMR" id="Q642B6"/>
<dbReference type="FunCoup" id="Q642B6">
    <property type="interactions" value="688"/>
</dbReference>
<dbReference type="STRING" id="10116.ENSRNOP00000024794"/>
<dbReference type="GlyGen" id="Q642B6">
    <property type="glycosylation" value="1 site"/>
</dbReference>
<dbReference type="iPTMnet" id="Q642B6"/>
<dbReference type="PhosphoSitePlus" id="Q642B6"/>
<dbReference type="PaxDb" id="10116-ENSRNOP00000024794"/>
<dbReference type="Ensembl" id="ENSRNOT00000024794.5">
    <property type="protein sequence ID" value="ENSRNOP00000024794.4"/>
    <property type="gene ID" value="ENSRNOG00000018351.5"/>
</dbReference>
<dbReference type="GeneID" id="363291"/>
<dbReference type="KEGG" id="rno:363291"/>
<dbReference type="UCSC" id="RGD:1359473">
    <property type="organism name" value="rat"/>
</dbReference>
<dbReference type="AGR" id="RGD:1359473"/>
<dbReference type="CTD" id="51078"/>
<dbReference type="RGD" id="1359473">
    <property type="gene designation" value="Thap4"/>
</dbReference>
<dbReference type="eggNOG" id="KOG3371">
    <property type="taxonomic scope" value="Eukaryota"/>
</dbReference>
<dbReference type="GeneTree" id="ENSGT00940000158447"/>
<dbReference type="HOGENOM" id="CLU_037087_0_0_1"/>
<dbReference type="InParanoid" id="Q642B6"/>
<dbReference type="OrthoDB" id="58529at2759"/>
<dbReference type="PhylomeDB" id="Q642B6"/>
<dbReference type="TreeFam" id="TF315956"/>
<dbReference type="PRO" id="PR:Q642B6"/>
<dbReference type="Proteomes" id="UP000002494">
    <property type="component" value="Chromosome 9"/>
</dbReference>
<dbReference type="Bgee" id="ENSRNOG00000018351">
    <property type="expression patterns" value="Expressed in skeletal muscle tissue and 20 other cell types or tissues"/>
</dbReference>
<dbReference type="GO" id="GO:0005829">
    <property type="term" value="C:cytosol"/>
    <property type="evidence" value="ECO:0007669"/>
    <property type="project" value="Ensembl"/>
</dbReference>
<dbReference type="GO" id="GO:0005654">
    <property type="term" value="C:nucleoplasm"/>
    <property type="evidence" value="ECO:0007669"/>
    <property type="project" value="Ensembl"/>
</dbReference>
<dbReference type="GO" id="GO:0003677">
    <property type="term" value="F:DNA binding"/>
    <property type="evidence" value="ECO:0007669"/>
    <property type="project" value="UniProtKB-KW"/>
</dbReference>
<dbReference type="GO" id="GO:0020037">
    <property type="term" value="F:heme binding"/>
    <property type="evidence" value="ECO:0000266"/>
    <property type="project" value="RGD"/>
</dbReference>
<dbReference type="GO" id="GO:0042802">
    <property type="term" value="F:identical protein binding"/>
    <property type="evidence" value="ECO:0000266"/>
    <property type="project" value="RGD"/>
</dbReference>
<dbReference type="GO" id="GO:0070026">
    <property type="term" value="F:nitric oxide binding"/>
    <property type="evidence" value="ECO:0000250"/>
    <property type="project" value="UniProtKB"/>
</dbReference>
<dbReference type="GO" id="GO:0062213">
    <property type="term" value="F:peroxynitrite isomerase activity"/>
    <property type="evidence" value="ECO:0000250"/>
    <property type="project" value="UniProtKB"/>
</dbReference>
<dbReference type="GO" id="GO:0008270">
    <property type="term" value="F:zinc ion binding"/>
    <property type="evidence" value="ECO:0007669"/>
    <property type="project" value="UniProtKB-KW"/>
</dbReference>
<dbReference type="GO" id="GO:0042126">
    <property type="term" value="P:nitrate metabolic process"/>
    <property type="evidence" value="ECO:0000250"/>
    <property type="project" value="UniProtKB"/>
</dbReference>
<dbReference type="GO" id="GO:0006570">
    <property type="term" value="P:tyrosine metabolic process"/>
    <property type="evidence" value="ECO:0000250"/>
    <property type="project" value="UniProtKB"/>
</dbReference>
<dbReference type="CDD" id="cd07828">
    <property type="entry name" value="lipocalin_heme-bd-THAP4-like"/>
    <property type="match status" value="1"/>
</dbReference>
<dbReference type="FunFam" id="2.40.128.20:FF:000014">
    <property type="entry name" value="THAP domain-containing protein 4 isoform X1"/>
    <property type="match status" value="1"/>
</dbReference>
<dbReference type="Gene3D" id="2.40.128.20">
    <property type="match status" value="1"/>
</dbReference>
<dbReference type="Gene3D" id="6.20.210.20">
    <property type="entry name" value="THAP domain"/>
    <property type="match status" value="1"/>
</dbReference>
<dbReference type="InterPro" id="IPR012674">
    <property type="entry name" value="Calycin"/>
</dbReference>
<dbReference type="InterPro" id="IPR045165">
    <property type="entry name" value="Nitrobindin"/>
</dbReference>
<dbReference type="InterPro" id="IPR014878">
    <property type="entry name" value="THAP4-like_heme-bd"/>
</dbReference>
<dbReference type="InterPro" id="IPR006612">
    <property type="entry name" value="THAP_Znf"/>
</dbReference>
<dbReference type="InterPro" id="IPR038441">
    <property type="entry name" value="THAP_Znf_sf"/>
</dbReference>
<dbReference type="PANTHER" id="PTHR15854:SF4">
    <property type="entry name" value="PEROXYNITRITE ISOMERASE THAP4"/>
    <property type="match status" value="1"/>
</dbReference>
<dbReference type="PANTHER" id="PTHR15854">
    <property type="entry name" value="THAP4 PROTEIN"/>
    <property type="match status" value="1"/>
</dbReference>
<dbReference type="Pfam" id="PF05485">
    <property type="entry name" value="THAP"/>
    <property type="match status" value="1"/>
</dbReference>
<dbReference type="Pfam" id="PF08768">
    <property type="entry name" value="THAP4_heme-bd"/>
    <property type="match status" value="1"/>
</dbReference>
<dbReference type="SMART" id="SM00692">
    <property type="entry name" value="DM3"/>
    <property type="match status" value="1"/>
</dbReference>
<dbReference type="SMART" id="SM00980">
    <property type="entry name" value="THAP"/>
    <property type="match status" value="1"/>
</dbReference>
<dbReference type="SUPFAM" id="SSF57716">
    <property type="entry name" value="Glucocorticoid receptor-like (DNA-binding domain)"/>
    <property type="match status" value="1"/>
</dbReference>
<dbReference type="SUPFAM" id="SSF50814">
    <property type="entry name" value="Lipocalins"/>
    <property type="match status" value="1"/>
</dbReference>
<dbReference type="PROSITE" id="PS50950">
    <property type="entry name" value="ZF_THAP"/>
    <property type="match status" value="1"/>
</dbReference>
<organism>
    <name type="scientific">Rattus norvegicus</name>
    <name type="common">Rat</name>
    <dbReference type="NCBI Taxonomy" id="10116"/>
    <lineage>
        <taxon>Eukaryota</taxon>
        <taxon>Metazoa</taxon>
        <taxon>Chordata</taxon>
        <taxon>Craniata</taxon>
        <taxon>Vertebrata</taxon>
        <taxon>Euteleostomi</taxon>
        <taxon>Mammalia</taxon>
        <taxon>Eutheria</taxon>
        <taxon>Euarchontoglires</taxon>
        <taxon>Glires</taxon>
        <taxon>Rodentia</taxon>
        <taxon>Myomorpha</taxon>
        <taxon>Muroidea</taxon>
        <taxon>Muridae</taxon>
        <taxon>Murinae</taxon>
        <taxon>Rattus</taxon>
    </lineage>
</organism>
<comment type="function">
    <text evidence="2">Heme-binding protein able to scavenge peroxynitrite and to protect free L-tyrosine against peroxynitrite-mediated nitration, by acting as a peroxynitrite isomerase that converts peroxynitrite to nitrate. Therefore, this protein likely plays a role in peroxynitrite sensing and in the detoxification of reactive nitrogen and oxygen species (RNS and ROS, respectively). Is able to bind nitric oxide (NO) in vitro, but may act as a sensor of peroxynitrite levels in vivo, possibly modulating the transcriptional activity residing in the N-terminal region.</text>
</comment>
<comment type="catalytic activity">
    <reaction evidence="2">
        <text>peroxynitrite = nitrate</text>
        <dbReference type="Rhea" id="RHEA:63116"/>
        <dbReference type="ChEBI" id="CHEBI:17632"/>
        <dbReference type="ChEBI" id="CHEBI:25941"/>
    </reaction>
    <physiologicalReaction direction="left-to-right" evidence="2">
        <dbReference type="Rhea" id="RHEA:63117"/>
    </physiologicalReaction>
</comment>
<comment type="cofactor">
    <cofactor evidence="2">
        <name>heme b</name>
        <dbReference type="ChEBI" id="CHEBI:60344"/>
    </cofactor>
    <text evidence="2">Binds 1 heme b group per subunit, that coordinates a highly solvent-exposed Fe(III) atom.</text>
</comment>
<comment type="pathway">
    <text evidence="2">Nitrogen metabolism.</text>
</comment>
<comment type="subunit">
    <text evidence="2">Homodimer.</text>
</comment>
<comment type="subcellular location">
    <subcellularLocation>
        <location evidence="2">Cytoplasm</location>
    </subcellularLocation>
    <subcellularLocation>
        <location evidence="2">Nucleus</location>
    </subcellularLocation>
    <text evidence="2">Localizes mainly in the cytoplasm and partially in the nucleus.</text>
</comment>
<comment type="domain">
    <text evidence="2">The C-terminal nitrobindin region coordinates a heme and bears the isomerase activity. The N-terminal zinc finger domain likely binds DNA and may be involved in transcriptional regulation.</text>
</comment>
<comment type="similarity">
    <text evidence="5">In the C-terminal section; belongs to the nitrobindin family.</text>
</comment>
<keyword id="KW-0963">Cytoplasm</keyword>
<keyword id="KW-0238">DNA-binding</keyword>
<keyword id="KW-0349">Heme</keyword>
<keyword id="KW-0408">Iron</keyword>
<keyword id="KW-0413">Isomerase</keyword>
<keyword id="KW-0479">Metal-binding</keyword>
<keyword id="KW-0539">Nucleus</keyword>
<keyword id="KW-0597">Phosphoprotein</keyword>
<keyword id="KW-1185">Reference proteome</keyword>
<keyword id="KW-0862">Zinc</keyword>
<keyword id="KW-0863">Zinc-finger</keyword>
<evidence type="ECO:0000250" key="1">
    <source>
        <dbReference type="UniProtKB" id="Q8WTV1"/>
    </source>
</evidence>
<evidence type="ECO:0000250" key="2">
    <source>
        <dbReference type="UniProtKB" id="Q8WY91"/>
    </source>
</evidence>
<evidence type="ECO:0000255" key="3">
    <source>
        <dbReference type="PROSITE-ProRule" id="PRU00309"/>
    </source>
</evidence>
<evidence type="ECO:0000256" key="4">
    <source>
        <dbReference type="SAM" id="MobiDB-lite"/>
    </source>
</evidence>
<evidence type="ECO:0000305" key="5"/>
<evidence type="ECO:0000312" key="6">
    <source>
        <dbReference type="RGD" id="1359473"/>
    </source>
</evidence>